<dbReference type="EMBL" id="AE016795">
    <property type="protein sequence ID" value="AAO10136.1"/>
    <property type="molecule type" value="Genomic_DNA"/>
</dbReference>
<dbReference type="RefSeq" id="WP_011079639.1">
    <property type="nucleotide sequence ID" value="NC_004459.3"/>
</dbReference>
<dbReference type="SMR" id="Q8DBT6"/>
<dbReference type="KEGG" id="vvu:VV1_1721"/>
<dbReference type="HOGENOM" id="CLU_002794_2_1_6"/>
<dbReference type="Proteomes" id="UP000002275">
    <property type="component" value="Chromosome 1"/>
</dbReference>
<dbReference type="GO" id="GO:0005829">
    <property type="term" value="C:cytosol"/>
    <property type="evidence" value="ECO:0007669"/>
    <property type="project" value="TreeGrafter"/>
</dbReference>
<dbReference type="GO" id="GO:0005525">
    <property type="term" value="F:GTP binding"/>
    <property type="evidence" value="ECO:0007669"/>
    <property type="project" value="UniProtKB-UniRule"/>
</dbReference>
<dbReference type="GO" id="GO:0003924">
    <property type="term" value="F:GTPase activity"/>
    <property type="evidence" value="ECO:0007669"/>
    <property type="project" value="InterPro"/>
</dbReference>
<dbReference type="GO" id="GO:0097216">
    <property type="term" value="F:guanosine tetraphosphate binding"/>
    <property type="evidence" value="ECO:0007669"/>
    <property type="project" value="UniProtKB-ARBA"/>
</dbReference>
<dbReference type="GO" id="GO:0016150">
    <property type="term" value="F:translation release factor activity, codon nonspecific"/>
    <property type="evidence" value="ECO:0007669"/>
    <property type="project" value="TreeGrafter"/>
</dbReference>
<dbReference type="GO" id="GO:0016149">
    <property type="term" value="F:translation release factor activity, codon specific"/>
    <property type="evidence" value="ECO:0007669"/>
    <property type="project" value="UniProtKB-UniRule"/>
</dbReference>
<dbReference type="GO" id="GO:0006449">
    <property type="term" value="P:regulation of translational termination"/>
    <property type="evidence" value="ECO:0007669"/>
    <property type="project" value="UniProtKB-UniRule"/>
</dbReference>
<dbReference type="CDD" id="cd04169">
    <property type="entry name" value="RF3"/>
    <property type="match status" value="1"/>
</dbReference>
<dbReference type="CDD" id="cd03689">
    <property type="entry name" value="RF3_II"/>
    <property type="match status" value="1"/>
</dbReference>
<dbReference type="CDD" id="cd16259">
    <property type="entry name" value="RF3_III"/>
    <property type="match status" value="1"/>
</dbReference>
<dbReference type="FunFam" id="2.40.30.10:FF:000040">
    <property type="entry name" value="Peptide chain release factor 3"/>
    <property type="match status" value="1"/>
</dbReference>
<dbReference type="FunFam" id="3.30.70.3280:FF:000001">
    <property type="entry name" value="Peptide chain release factor 3"/>
    <property type="match status" value="1"/>
</dbReference>
<dbReference type="FunFam" id="3.40.50.300:FF:000542">
    <property type="entry name" value="Peptide chain release factor 3"/>
    <property type="match status" value="1"/>
</dbReference>
<dbReference type="Gene3D" id="3.40.50.300">
    <property type="entry name" value="P-loop containing nucleotide triphosphate hydrolases"/>
    <property type="match status" value="2"/>
</dbReference>
<dbReference type="Gene3D" id="3.30.70.3280">
    <property type="entry name" value="Peptide chain release factor 3, domain III"/>
    <property type="match status" value="1"/>
</dbReference>
<dbReference type="HAMAP" id="MF_00072">
    <property type="entry name" value="Rel_fac_3"/>
    <property type="match status" value="1"/>
</dbReference>
<dbReference type="InterPro" id="IPR053905">
    <property type="entry name" value="EF-G-like_DII"/>
</dbReference>
<dbReference type="InterPro" id="IPR035647">
    <property type="entry name" value="EFG_III/V"/>
</dbReference>
<dbReference type="InterPro" id="IPR031157">
    <property type="entry name" value="G_TR_CS"/>
</dbReference>
<dbReference type="InterPro" id="IPR027417">
    <property type="entry name" value="P-loop_NTPase"/>
</dbReference>
<dbReference type="InterPro" id="IPR004548">
    <property type="entry name" value="PrfC"/>
</dbReference>
<dbReference type="InterPro" id="IPR032090">
    <property type="entry name" value="RF3_C"/>
</dbReference>
<dbReference type="InterPro" id="IPR038467">
    <property type="entry name" value="RF3_dom_3_sf"/>
</dbReference>
<dbReference type="InterPro" id="IPR041732">
    <property type="entry name" value="RF3_GTP-bd"/>
</dbReference>
<dbReference type="InterPro" id="IPR005225">
    <property type="entry name" value="Small_GTP-bd"/>
</dbReference>
<dbReference type="InterPro" id="IPR000795">
    <property type="entry name" value="T_Tr_GTP-bd_dom"/>
</dbReference>
<dbReference type="InterPro" id="IPR009000">
    <property type="entry name" value="Transl_B-barrel_sf"/>
</dbReference>
<dbReference type="NCBIfam" id="TIGR00503">
    <property type="entry name" value="prfC"/>
    <property type="match status" value="1"/>
</dbReference>
<dbReference type="NCBIfam" id="NF001964">
    <property type="entry name" value="PRK00741.1"/>
    <property type="match status" value="1"/>
</dbReference>
<dbReference type="NCBIfam" id="TIGR00231">
    <property type="entry name" value="small_GTP"/>
    <property type="match status" value="1"/>
</dbReference>
<dbReference type="PANTHER" id="PTHR43556">
    <property type="entry name" value="PEPTIDE CHAIN RELEASE FACTOR RF3"/>
    <property type="match status" value="1"/>
</dbReference>
<dbReference type="PANTHER" id="PTHR43556:SF2">
    <property type="entry name" value="PEPTIDE CHAIN RELEASE FACTOR RF3"/>
    <property type="match status" value="1"/>
</dbReference>
<dbReference type="Pfam" id="PF22042">
    <property type="entry name" value="EF-G_D2"/>
    <property type="match status" value="1"/>
</dbReference>
<dbReference type="Pfam" id="PF00009">
    <property type="entry name" value="GTP_EFTU"/>
    <property type="match status" value="1"/>
</dbReference>
<dbReference type="Pfam" id="PF16658">
    <property type="entry name" value="RF3_C"/>
    <property type="match status" value="1"/>
</dbReference>
<dbReference type="PRINTS" id="PR00315">
    <property type="entry name" value="ELONGATNFCT"/>
</dbReference>
<dbReference type="SUPFAM" id="SSF54980">
    <property type="entry name" value="EF-G C-terminal domain-like"/>
    <property type="match status" value="1"/>
</dbReference>
<dbReference type="SUPFAM" id="SSF52540">
    <property type="entry name" value="P-loop containing nucleoside triphosphate hydrolases"/>
    <property type="match status" value="1"/>
</dbReference>
<dbReference type="SUPFAM" id="SSF50447">
    <property type="entry name" value="Translation proteins"/>
    <property type="match status" value="1"/>
</dbReference>
<dbReference type="PROSITE" id="PS00301">
    <property type="entry name" value="G_TR_1"/>
    <property type="match status" value="1"/>
</dbReference>
<dbReference type="PROSITE" id="PS51722">
    <property type="entry name" value="G_TR_2"/>
    <property type="match status" value="1"/>
</dbReference>
<proteinExistence type="inferred from homology"/>
<comment type="function">
    <text evidence="1">Increases the formation of ribosomal termination complexes and stimulates activities of RF-1 and RF-2. It binds guanine nucleotides and has strong preference for UGA stop codons. It may interact directly with the ribosome. The stimulation of RF-1 and RF-2 is significantly reduced by GTP and GDP, but not by GMP.</text>
</comment>
<comment type="subcellular location">
    <subcellularLocation>
        <location evidence="1">Cytoplasm</location>
    </subcellularLocation>
</comment>
<comment type="similarity">
    <text evidence="1">Belongs to the TRAFAC class translation factor GTPase superfamily. Classic translation factor GTPase family. PrfC subfamily.</text>
</comment>
<accession>Q8DBT6</accession>
<protein>
    <recommendedName>
        <fullName evidence="1">Peptide chain release factor 3</fullName>
        <shortName evidence="1">RF-3</shortName>
    </recommendedName>
</protein>
<keyword id="KW-0963">Cytoplasm</keyword>
<keyword id="KW-0342">GTP-binding</keyword>
<keyword id="KW-0547">Nucleotide-binding</keyword>
<keyword id="KW-0648">Protein biosynthesis</keyword>
<sequence length="529" mass="59197">MSNAPFLSEVSKRRTFAIISHPDAGKTTITEKVLLFGRAIQTAGTVKGRGSSQHAKSDWMEMEKERGISVTTSVMQFPYNDCLVNLLDTPGHEDFSEDTYRTLTAVDSCLMVIDAAKGVEDRTRKLMEVTRLRDTPIVTFMNKLDRDIRDPMELLDEVESELNIACAPVSWPIGCGKEFKGVYHIHRDETILYSTGQGHTIQEQRIIKGLDNPDLDAEVGADLAEQLREELELVLGASHEFDQEMFLKGELTPVFFGTALGNFGVDHMLDGLTDWAPAPLPRQANERAVEATEDKFTGFVFKIQANMDPKHRDRIAFMRIVSGTYTQGMKMNHVRLGKQVNISDAVTFMAGDRSRAEAAYAGDIIGLHNHGTIQIGDTFTQGESLKFSGIPNFAPELFRRIRLRDPLKQKQLLKGLVQLSEEGAVQVFRPLQNNDLIVGAVGVLQFDVVVARLKSEYNVEAIYESVNVATARWVECGDAKKLDEFQRKNQTNLALDGGDNLTYIAPTMVNLNLAKERFPEVEFRATREH</sequence>
<gene>
    <name evidence="1" type="primary">prfC</name>
    <name type="ordered locus">VV1_1721</name>
</gene>
<reference key="1">
    <citation type="submission" date="2002-12" db="EMBL/GenBank/DDBJ databases">
        <title>Complete genome sequence of Vibrio vulnificus CMCP6.</title>
        <authorList>
            <person name="Rhee J.H."/>
            <person name="Kim S.Y."/>
            <person name="Chung S.S."/>
            <person name="Kim J.J."/>
            <person name="Moon Y.H."/>
            <person name="Jeong H."/>
            <person name="Choy H.E."/>
        </authorList>
    </citation>
    <scope>NUCLEOTIDE SEQUENCE [LARGE SCALE GENOMIC DNA]</scope>
    <source>
        <strain>CMCP6</strain>
    </source>
</reference>
<evidence type="ECO:0000255" key="1">
    <source>
        <dbReference type="HAMAP-Rule" id="MF_00072"/>
    </source>
</evidence>
<feature type="chain" id="PRO_0000210981" description="Peptide chain release factor 3">
    <location>
        <begin position="1"/>
        <end position="529"/>
    </location>
</feature>
<feature type="domain" description="tr-type G">
    <location>
        <begin position="11"/>
        <end position="280"/>
    </location>
</feature>
<feature type="binding site" evidence="1">
    <location>
        <begin position="20"/>
        <end position="27"/>
    </location>
    <ligand>
        <name>GTP</name>
        <dbReference type="ChEBI" id="CHEBI:37565"/>
    </ligand>
</feature>
<feature type="binding site" evidence="1">
    <location>
        <begin position="88"/>
        <end position="92"/>
    </location>
    <ligand>
        <name>GTP</name>
        <dbReference type="ChEBI" id="CHEBI:37565"/>
    </ligand>
</feature>
<feature type="binding site" evidence="1">
    <location>
        <begin position="142"/>
        <end position="145"/>
    </location>
    <ligand>
        <name>GTP</name>
        <dbReference type="ChEBI" id="CHEBI:37565"/>
    </ligand>
</feature>
<name>RF3_VIBVU</name>
<organism>
    <name type="scientific">Vibrio vulnificus (strain CMCP6)</name>
    <dbReference type="NCBI Taxonomy" id="216895"/>
    <lineage>
        <taxon>Bacteria</taxon>
        <taxon>Pseudomonadati</taxon>
        <taxon>Pseudomonadota</taxon>
        <taxon>Gammaproteobacteria</taxon>
        <taxon>Vibrionales</taxon>
        <taxon>Vibrionaceae</taxon>
        <taxon>Vibrio</taxon>
    </lineage>
</organism>